<gene>
    <name type="primary">Hsd3b</name>
</gene>
<evidence type="ECO:0000250" key="1"/>
<evidence type="ECO:0000255" key="2"/>
<evidence type="ECO:0000305" key="3"/>
<proteinExistence type="evidence at transcript level"/>
<protein>
    <recommendedName>
        <fullName>3 beta-hydroxysteroid dehydrogenase/Delta 5--&gt;4-isomerase type 2</fullName>
    </recommendedName>
    <alternativeName>
        <fullName>3 beta-hydroxysteroid dehydrogenase/Delta 5--&gt;4-isomerase type II</fullName>
        <shortName>3-beta-HSD II</shortName>
    </alternativeName>
    <domain>
        <recommendedName>
            <fullName>3-beta-hydroxy-Delta(5)-steroid dehydrogenase</fullName>
            <ecNumber>1.1.1.145</ecNumber>
        </recommendedName>
        <alternativeName>
            <fullName>3-beta-hydroxy-5-ene steroid dehydrogenase</fullName>
        </alternativeName>
        <alternativeName>
            <fullName>Progesterone reductase</fullName>
        </alternativeName>
    </domain>
    <domain>
        <recommendedName>
            <fullName>Steroid Delta-isomerase</fullName>
            <ecNumber>5.3.3.1</ecNumber>
        </recommendedName>
        <alternativeName>
            <fullName>Delta-5-3-ketosteroid isomerase</fullName>
        </alternativeName>
    </domain>
</protein>
<keyword id="KW-0256">Endoplasmic reticulum</keyword>
<keyword id="KW-0413">Isomerase</keyword>
<keyword id="KW-0472">Membrane</keyword>
<keyword id="KW-0496">Mitochondrion</keyword>
<keyword id="KW-0511">Multifunctional enzyme</keyword>
<keyword id="KW-0520">NAD</keyword>
<keyword id="KW-0560">Oxidoreductase</keyword>
<keyword id="KW-1185">Reference proteome</keyword>
<keyword id="KW-0755">Steroidogenesis</keyword>
<keyword id="KW-0812">Transmembrane</keyword>
<keyword id="KW-1133">Transmembrane helix</keyword>
<sequence length="373" mass="42277">MPGWSCLVTGAGGFVGQRIIRMLVQEKELQEVRALDKVFRPETKEEFSKLQTKAKVTMLEGDILDAQYLRRACQGISVVIHTASVMDFSRVLPRQTILDVNLKGTQNLLEAGIHASVPAFIYCSTVDVAGPNSYKKTILNGREEEHHESTWSNPYPYSKKMAEKAVLAANGSILKNGGTLHTCALRPMYIYGERGQFLSRIIIMALKNKGVLNVTGKFSIVNPVYVGNVAWAHILAARGLRDPKKSQNIQGQFYYISDDTPHQSYDDLNCTLSKEWGLRLDSSWSLPLPLLYWLAFLLETVSFLLRPFYNYRPPFNCHLVTLSNSKFTFSYKKAQRDLGYEPLVSWEEAKQKTSEWIGTLVEQHRETLDTKSQ</sequence>
<organism>
    <name type="scientific">Rattus norvegicus</name>
    <name type="common">Rat</name>
    <dbReference type="NCBI Taxonomy" id="10116"/>
    <lineage>
        <taxon>Eukaryota</taxon>
        <taxon>Metazoa</taxon>
        <taxon>Chordata</taxon>
        <taxon>Craniata</taxon>
        <taxon>Vertebrata</taxon>
        <taxon>Euteleostomi</taxon>
        <taxon>Mammalia</taxon>
        <taxon>Eutheria</taxon>
        <taxon>Euarchontoglires</taxon>
        <taxon>Glires</taxon>
        <taxon>Rodentia</taxon>
        <taxon>Myomorpha</taxon>
        <taxon>Muroidea</taxon>
        <taxon>Muridae</taxon>
        <taxon>Murinae</taxon>
        <taxon>Rattus</taxon>
    </lineage>
</organism>
<accession>P22072</accession>
<reference key="1">
    <citation type="journal article" date="1991" name="J. Biol. Chem.">
        <title>Characterization of rat 3 beta-hydroxysteroid dehydrogenase/delta 5-delta 4 isomerase cDNAs and differential tissue-specific expression of the corresponding mRNAs in steroidogenic and peripheral tissues.</title>
        <authorList>
            <person name="Zhao H.-F."/>
            <person name="Labrie C."/>
            <person name="Simard J."/>
            <person name="de Launoit Y."/>
            <person name="Trudel C."/>
            <person name="Martel C."/>
            <person name="Rheaume E."/>
            <person name="Dupont E."/>
            <person name="Luu-The V."/>
            <person name="Pelletier G."/>
            <person name="Labrie F."/>
        </authorList>
    </citation>
    <scope>NUCLEOTIDE SEQUENCE [MRNA]</scope>
</reference>
<reference key="2">
    <citation type="journal article" date="1991" name="Mol. Endocrinol.">
        <title>Regulation of expression of male-specific rat liver microsomal 3 beta-hydroxysteroid dehydrogenase.</title>
        <authorList>
            <person name="Naville D."/>
            <person name="Keeney D.S."/>
            <person name="Jenkin G."/>
            <person name="Murry B.A."/>
            <person name="Head J.R."/>
            <person name="Mason J.I."/>
        </authorList>
    </citation>
    <scope>NUCLEOTIDE SEQUENCE [MRNA]</scope>
    <source>
        <tissue>Liver</tissue>
    </source>
</reference>
<comment type="function">
    <text>3-beta-HSD is a bifunctional enzyme, that catalyzes the oxidative conversion of Delta(5)-ene-3-beta-hydroxy steroid, and the oxidative conversion of ketosteroids. The 3-beta-HSD enzymatic system plays a crucial role in the biosynthesis of all classes of hormonal steroids.</text>
</comment>
<comment type="catalytic activity">
    <reaction>
        <text>a 3beta-hydroxy-Delta(5)-steroid + NAD(+) = a 3-oxo-Delta(5)-steroid + NADH + H(+)</text>
        <dbReference type="Rhea" id="RHEA:24076"/>
        <dbReference type="ChEBI" id="CHEBI:1722"/>
        <dbReference type="ChEBI" id="CHEBI:15378"/>
        <dbReference type="ChEBI" id="CHEBI:47907"/>
        <dbReference type="ChEBI" id="CHEBI:57540"/>
        <dbReference type="ChEBI" id="CHEBI:57945"/>
        <dbReference type="EC" id="1.1.1.145"/>
    </reaction>
</comment>
<comment type="catalytic activity">
    <reaction>
        <text>a 3-oxo-Delta(5)-steroid = a 3-oxo-Delta(4)-steroid</text>
        <dbReference type="Rhea" id="RHEA:14709"/>
        <dbReference type="ChEBI" id="CHEBI:47907"/>
        <dbReference type="ChEBI" id="CHEBI:47909"/>
        <dbReference type="EC" id="5.3.3.1"/>
    </reaction>
</comment>
<comment type="pathway">
    <text>Lipid metabolism; steroid biosynthesis.</text>
</comment>
<comment type="subcellular location">
    <subcellularLocation>
        <location>Endoplasmic reticulum membrane</location>
        <topology>Single-pass membrane protein</topology>
    </subcellularLocation>
    <subcellularLocation>
        <location>Mitochondrion membrane</location>
        <topology>Single-pass membrane protein</topology>
    </subcellularLocation>
</comment>
<comment type="tissue specificity">
    <text>Adrenal glands, testes and ovaries.</text>
</comment>
<comment type="similarity">
    <text evidence="3">Belongs to the 3-beta-HSD family.</text>
</comment>
<comment type="caution">
    <text evidence="3">Rat 3-beta-HSD type II may possess only one transmembrane domain.</text>
</comment>
<name>3BHS2_RAT</name>
<dbReference type="EC" id="1.1.1.145"/>
<dbReference type="EC" id="5.3.3.1"/>
<dbReference type="EMBL" id="M38179">
    <property type="protein sequence ID" value="AAA63475.1"/>
    <property type="molecule type" value="mRNA"/>
</dbReference>
<dbReference type="EMBL" id="S63167">
    <property type="protein sequence ID" value="AAB20228.1"/>
    <property type="molecule type" value="mRNA"/>
</dbReference>
<dbReference type="PIR" id="A40378">
    <property type="entry name" value="DERTHM"/>
</dbReference>
<dbReference type="PIR" id="B39051">
    <property type="entry name" value="DERTH2"/>
</dbReference>
<dbReference type="RefSeq" id="NP_001036084.1">
    <property type="nucleotide sequence ID" value="NM_001042619.1"/>
</dbReference>
<dbReference type="SMR" id="P22072"/>
<dbReference type="FunCoup" id="P22072">
    <property type="interactions" value="8"/>
</dbReference>
<dbReference type="iPTMnet" id="P22072"/>
<dbReference type="PhosphoSitePlus" id="P22072"/>
<dbReference type="Ensembl" id="ENSRNOT00000056172.5">
    <property type="protein sequence ID" value="ENSRNOP00000053018.4"/>
    <property type="gene ID" value="ENSRNOG00000063905.1"/>
</dbReference>
<dbReference type="GeneID" id="682974"/>
<dbReference type="KEGG" id="rno:682974"/>
<dbReference type="UCSC" id="RGD:1592771">
    <property type="organism name" value="rat"/>
</dbReference>
<dbReference type="AGR" id="RGD:1592771"/>
<dbReference type="CTD" id="15494"/>
<dbReference type="RGD" id="1592771">
    <property type="gene designation" value="Hsd3b"/>
</dbReference>
<dbReference type="GeneTree" id="ENSGT00940000155444"/>
<dbReference type="InParanoid" id="P22072"/>
<dbReference type="OMA" id="YVENCTY"/>
<dbReference type="OrthoDB" id="1925334at2759"/>
<dbReference type="Reactome" id="R-RNO-193048">
    <property type="pathway name" value="Androgen biosynthesis"/>
</dbReference>
<dbReference type="Reactome" id="R-RNO-193993">
    <property type="pathway name" value="Mineralocorticoid biosynthesis"/>
</dbReference>
<dbReference type="Reactome" id="R-RNO-194002">
    <property type="pathway name" value="Glucocorticoid biosynthesis"/>
</dbReference>
<dbReference type="UniPathway" id="UPA00062"/>
<dbReference type="PRO" id="PR:P22072"/>
<dbReference type="Proteomes" id="UP000002494">
    <property type="component" value="Chromosome 2"/>
</dbReference>
<dbReference type="GO" id="GO:0005737">
    <property type="term" value="C:cytoplasm"/>
    <property type="evidence" value="ECO:0000318"/>
    <property type="project" value="GO_Central"/>
</dbReference>
<dbReference type="GO" id="GO:0005789">
    <property type="term" value="C:endoplasmic reticulum membrane"/>
    <property type="evidence" value="ECO:0007669"/>
    <property type="project" value="UniProtKB-SubCell"/>
</dbReference>
<dbReference type="GO" id="GO:0043231">
    <property type="term" value="C:intracellular membrane-bounded organelle"/>
    <property type="evidence" value="ECO:0000318"/>
    <property type="project" value="GO_Central"/>
</dbReference>
<dbReference type="GO" id="GO:0031966">
    <property type="term" value="C:mitochondrial membrane"/>
    <property type="evidence" value="ECO:0007669"/>
    <property type="project" value="UniProtKB-SubCell"/>
</dbReference>
<dbReference type="GO" id="GO:0003854">
    <property type="term" value="F:3-beta-hydroxy-Delta5-steroid dehydrogenase (NAD+) activity"/>
    <property type="evidence" value="ECO:0007669"/>
    <property type="project" value="UniProtKB-EC"/>
</dbReference>
<dbReference type="GO" id="GO:0016616">
    <property type="term" value="F:oxidoreductase activity, acting on the CH-OH group of donors, NAD or NADP as acceptor"/>
    <property type="evidence" value="ECO:0000318"/>
    <property type="project" value="GO_Central"/>
</dbReference>
<dbReference type="GO" id="GO:0004769">
    <property type="term" value="F:steroid Delta-isomerase activity"/>
    <property type="evidence" value="ECO:0007669"/>
    <property type="project" value="UniProtKB-EC"/>
</dbReference>
<dbReference type="GO" id="GO:0008207">
    <property type="term" value="P:C21-steroid hormone metabolic process"/>
    <property type="evidence" value="ECO:0000318"/>
    <property type="project" value="GO_Central"/>
</dbReference>
<dbReference type="GO" id="GO:0006694">
    <property type="term" value="P:steroid biosynthetic process"/>
    <property type="evidence" value="ECO:0000318"/>
    <property type="project" value="GO_Central"/>
</dbReference>
<dbReference type="FunFam" id="3.40.50.720:FF:000220">
    <property type="entry name" value="3 beta-hydroxysteroid dehydrogenase/Delta 5--&gt;4-isomerase type 1"/>
    <property type="match status" value="1"/>
</dbReference>
<dbReference type="Gene3D" id="3.40.50.720">
    <property type="entry name" value="NAD(P)-binding Rossmann-like Domain"/>
    <property type="match status" value="1"/>
</dbReference>
<dbReference type="InterPro" id="IPR002225">
    <property type="entry name" value="3Beta_OHSteriod_DH/Estase"/>
</dbReference>
<dbReference type="InterPro" id="IPR050177">
    <property type="entry name" value="Lipid_A_modif_metabolic_enz"/>
</dbReference>
<dbReference type="InterPro" id="IPR036291">
    <property type="entry name" value="NAD(P)-bd_dom_sf"/>
</dbReference>
<dbReference type="PANTHER" id="PTHR43245">
    <property type="entry name" value="BIFUNCTIONAL POLYMYXIN RESISTANCE PROTEIN ARNA"/>
    <property type="match status" value="1"/>
</dbReference>
<dbReference type="PANTHER" id="PTHR43245:SF51">
    <property type="entry name" value="SHORT CHAIN DEHYDROGENASE_REDUCTASE FAMILY 42E, MEMBER 2"/>
    <property type="match status" value="1"/>
</dbReference>
<dbReference type="Pfam" id="PF01073">
    <property type="entry name" value="3Beta_HSD"/>
    <property type="match status" value="1"/>
</dbReference>
<dbReference type="SUPFAM" id="SSF51735">
    <property type="entry name" value="NAD(P)-binding Rossmann-fold domains"/>
    <property type="match status" value="1"/>
</dbReference>
<feature type="chain" id="PRO_0000087788" description="3 beta-hydroxysteroid dehydrogenase/Delta 5--&gt;4-isomerase type 2">
    <location>
        <begin position="1"/>
        <end position="373"/>
    </location>
</feature>
<feature type="transmembrane region" description="Helical" evidence="2">
    <location>
        <begin position="288"/>
        <end position="308"/>
    </location>
</feature>
<feature type="active site" description="Proton acceptor" evidence="1">
    <location>
        <position position="155"/>
    </location>
</feature>
<feature type="binding site" evidence="1">
    <location>
        <position position="159"/>
    </location>
    <ligand>
        <name>NAD(+)</name>
        <dbReference type="ChEBI" id="CHEBI:57540"/>
    </ligand>
</feature>
<feature type="sequence conflict" description="In Ref. 2; AAB20228." evidence="3" ref="2">
    <original>A</original>
    <variation>T</variation>
    <location>
        <position position="115"/>
    </location>
</feature>
<feature type="sequence conflict" description="In Ref. 2; AAB20228." evidence="3" ref="2">
    <original>A</original>
    <variation>S</variation>
    <location>
        <position position="165"/>
    </location>
</feature>
<feature type="sequence conflict" description="In Ref. 2; AAB20228." evidence="3" ref="2">
    <original>E</original>
    <variation>V</variation>
    <location>
        <position position="341"/>
    </location>
</feature>